<sequence>MATTHLDVCAVVPAAGFGRRMQTECPKQYLSIGNQTILEHSVHALLAHPRVKRVVIAISPGDSRFAQLPLANHPQITVVDGGDERADSVLAGLKAAGDAQWVLVHDAARPCLHQDDLARLLALSETSRTGGILAAPVRDTMKRAEPGKNAIAHTVDRNGLWHALTPQFFPRELLHDCLTRALNEGATITDEASALEYCGFHPQLVEGRADNIKVTRPEDLALAEFYLTRTIHQENT</sequence>
<dbReference type="EC" id="2.7.7.60" evidence="1"/>
<dbReference type="EMBL" id="CP000038">
    <property type="protein sequence ID" value="AAZ89497.1"/>
    <property type="molecule type" value="Genomic_DNA"/>
</dbReference>
<dbReference type="RefSeq" id="WP_000246138.1">
    <property type="nucleotide sequence ID" value="NC_007384.1"/>
</dbReference>
<dbReference type="SMR" id="Q3YYB5"/>
<dbReference type="GeneID" id="93779259"/>
<dbReference type="KEGG" id="ssn:SSON_2895"/>
<dbReference type="HOGENOM" id="CLU_061281_3_1_6"/>
<dbReference type="UniPathway" id="UPA00056">
    <property type="reaction ID" value="UER00093"/>
</dbReference>
<dbReference type="Proteomes" id="UP000002529">
    <property type="component" value="Chromosome"/>
</dbReference>
<dbReference type="GO" id="GO:0050518">
    <property type="term" value="F:2-C-methyl-D-erythritol 4-phosphate cytidylyltransferase activity"/>
    <property type="evidence" value="ECO:0007669"/>
    <property type="project" value="UniProtKB-UniRule"/>
</dbReference>
<dbReference type="GO" id="GO:0019288">
    <property type="term" value="P:isopentenyl diphosphate biosynthetic process, methylerythritol 4-phosphate pathway"/>
    <property type="evidence" value="ECO:0007669"/>
    <property type="project" value="UniProtKB-UniRule"/>
</dbReference>
<dbReference type="CDD" id="cd02516">
    <property type="entry name" value="CDP-ME_synthetase"/>
    <property type="match status" value="1"/>
</dbReference>
<dbReference type="FunFam" id="3.90.550.10:FF:000003">
    <property type="entry name" value="2-C-methyl-D-erythritol 4-phosphate cytidylyltransferase"/>
    <property type="match status" value="1"/>
</dbReference>
<dbReference type="Gene3D" id="3.90.550.10">
    <property type="entry name" value="Spore Coat Polysaccharide Biosynthesis Protein SpsA, Chain A"/>
    <property type="match status" value="1"/>
</dbReference>
<dbReference type="HAMAP" id="MF_00108">
    <property type="entry name" value="IspD"/>
    <property type="match status" value="1"/>
</dbReference>
<dbReference type="InterPro" id="IPR001228">
    <property type="entry name" value="IspD"/>
</dbReference>
<dbReference type="InterPro" id="IPR034683">
    <property type="entry name" value="IspD/TarI"/>
</dbReference>
<dbReference type="InterPro" id="IPR050088">
    <property type="entry name" value="IspD/TarI_cytidylyltransf_bact"/>
</dbReference>
<dbReference type="InterPro" id="IPR018294">
    <property type="entry name" value="ISPD_synthase_CS"/>
</dbReference>
<dbReference type="InterPro" id="IPR029044">
    <property type="entry name" value="Nucleotide-diphossugar_trans"/>
</dbReference>
<dbReference type="NCBIfam" id="TIGR00453">
    <property type="entry name" value="ispD"/>
    <property type="match status" value="1"/>
</dbReference>
<dbReference type="PANTHER" id="PTHR32125">
    <property type="entry name" value="2-C-METHYL-D-ERYTHRITOL 4-PHOSPHATE CYTIDYLYLTRANSFERASE, CHLOROPLASTIC"/>
    <property type="match status" value="1"/>
</dbReference>
<dbReference type="PANTHER" id="PTHR32125:SF4">
    <property type="entry name" value="2-C-METHYL-D-ERYTHRITOL 4-PHOSPHATE CYTIDYLYLTRANSFERASE, CHLOROPLASTIC"/>
    <property type="match status" value="1"/>
</dbReference>
<dbReference type="Pfam" id="PF01128">
    <property type="entry name" value="IspD"/>
    <property type="match status" value="1"/>
</dbReference>
<dbReference type="SUPFAM" id="SSF53448">
    <property type="entry name" value="Nucleotide-diphospho-sugar transferases"/>
    <property type="match status" value="1"/>
</dbReference>
<dbReference type="PROSITE" id="PS01295">
    <property type="entry name" value="ISPD"/>
    <property type="match status" value="1"/>
</dbReference>
<evidence type="ECO:0000255" key="1">
    <source>
        <dbReference type="HAMAP-Rule" id="MF_00108"/>
    </source>
</evidence>
<protein>
    <recommendedName>
        <fullName evidence="1">2-C-methyl-D-erythritol 4-phosphate cytidylyltransferase</fullName>
        <ecNumber evidence="1">2.7.7.60</ecNumber>
    </recommendedName>
    <alternativeName>
        <fullName evidence="1">4-diphosphocytidyl-2C-methyl-D-erythritol synthase</fullName>
    </alternativeName>
    <alternativeName>
        <fullName evidence="1">MEP cytidylyltransferase</fullName>
        <shortName evidence="1">MCT</shortName>
    </alternativeName>
</protein>
<name>ISPD_SHISS</name>
<gene>
    <name evidence="1" type="primary">ispD</name>
    <name type="ordered locus">SSON_2895</name>
</gene>
<proteinExistence type="inferred from homology"/>
<reference key="1">
    <citation type="journal article" date="2005" name="Nucleic Acids Res.">
        <title>Genome dynamics and diversity of Shigella species, the etiologic agents of bacillary dysentery.</title>
        <authorList>
            <person name="Yang F."/>
            <person name="Yang J."/>
            <person name="Zhang X."/>
            <person name="Chen L."/>
            <person name="Jiang Y."/>
            <person name="Yan Y."/>
            <person name="Tang X."/>
            <person name="Wang J."/>
            <person name="Xiong Z."/>
            <person name="Dong J."/>
            <person name="Xue Y."/>
            <person name="Zhu Y."/>
            <person name="Xu X."/>
            <person name="Sun L."/>
            <person name="Chen S."/>
            <person name="Nie H."/>
            <person name="Peng J."/>
            <person name="Xu J."/>
            <person name="Wang Y."/>
            <person name="Yuan Z."/>
            <person name="Wen Y."/>
            <person name="Yao Z."/>
            <person name="Shen Y."/>
            <person name="Qiang B."/>
            <person name="Hou Y."/>
            <person name="Yu J."/>
            <person name="Jin Q."/>
        </authorList>
    </citation>
    <scope>NUCLEOTIDE SEQUENCE [LARGE SCALE GENOMIC DNA]</scope>
    <source>
        <strain>Ss046</strain>
    </source>
</reference>
<comment type="function">
    <text evidence="1">Catalyzes the formation of 4-diphosphocytidyl-2-C-methyl-D-erythritol from CTP and 2-C-methyl-D-erythritol 4-phosphate (MEP).</text>
</comment>
<comment type="catalytic activity">
    <reaction evidence="1">
        <text>2-C-methyl-D-erythritol 4-phosphate + CTP + H(+) = 4-CDP-2-C-methyl-D-erythritol + diphosphate</text>
        <dbReference type="Rhea" id="RHEA:13429"/>
        <dbReference type="ChEBI" id="CHEBI:15378"/>
        <dbReference type="ChEBI" id="CHEBI:33019"/>
        <dbReference type="ChEBI" id="CHEBI:37563"/>
        <dbReference type="ChEBI" id="CHEBI:57823"/>
        <dbReference type="ChEBI" id="CHEBI:58262"/>
        <dbReference type="EC" id="2.7.7.60"/>
    </reaction>
</comment>
<comment type="pathway">
    <text evidence="1">Isoprenoid biosynthesis; isopentenyl diphosphate biosynthesis via DXP pathway; isopentenyl diphosphate from 1-deoxy-D-xylulose 5-phosphate: step 2/6.</text>
</comment>
<comment type="subunit">
    <text evidence="1">Homodimer.</text>
</comment>
<comment type="similarity">
    <text evidence="1">Belongs to the IspD/TarI cytidylyltransferase family. IspD subfamily.</text>
</comment>
<feature type="chain" id="PRO_0000237821" description="2-C-methyl-D-erythritol 4-phosphate cytidylyltransferase">
    <location>
        <begin position="1"/>
        <end position="236"/>
    </location>
</feature>
<feature type="site" description="Transition state stabilizer" evidence="1">
    <location>
        <position position="20"/>
    </location>
</feature>
<feature type="site" description="Transition state stabilizer" evidence="1">
    <location>
        <position position="27"/>
    </location>
</feature>
<feature type="site" description="Positions MEP for the nucleophilic attack" evidence="1">
    <location>
        <position position="157"/>
    </location>
</feature>
<feature type="site" description="Positions MEP for the nucleophilic attack" evidence="1">
    <location>
        <position position="213"/>
    </location>
</feature>
<organism>
    <name type="scientific">Shigella sonnei (strain Ss046)</name>
    <dbReference type="NCBI Taxonomy" id="300269"/>
    <lineage>
        <taxon>Bacteria</taxon>
        <taxon>Pseudomonadati</taxon>
        <taxon>Pseudomonadota</taxon>
        <taxon>Gammaproteobacteria</taxon>
        <taxon>Enterobacterales</taxon>
        <taxon>Enterobacteriaceae</taxon>
        <taxon>Shigella</taxon>
    </lineage>
</organism>
<keyword id="KW-0414">Isoprene biosynthesis</keyword>
<keyword id="KW-0548">Nucleotidyltransferase</keyword>
<keyword id="KW-1185">Reference proteome</keyword>
<keyword id="KW-0808">Transferase</keyword>
<accession>Q3YYB5</accession>